<protein>
    <recommendedName>
        <fullName evidence="1">Glutamyl-tRNA(Gln) amidotransferase subunit A</fullName>
        <shortName evidence="1">Glu-ADT subunit A</shortName>
        <ecNumber evidence="1">6.3.5.7</ecNumber>
    </recommendedName>
</protein>
<keyword id="KW-0067">ATP-binding</keyword>
<keyword id="KW-0436">Ligase</keyword>
<keyword id="KW-0547">Nucleotide-binding</keyword>
<keyword id="KW-0648">Protein biosynthesis</keyword>
<comment type="function">
    <text evidence="1">Allows the formation of correctly charged Gln-tRNA(Gln) through the transamidation of misacylated Glu-tRNA(Gln) in organisms which lack glutaminyl-tRNA synthetase. The reaction takes place in the presence of glutamine and ATP through an activated gamma-phospho-Glu-tRNA(Gln).</text>
</comment>
<comment type="catalytic activity">
    <reaction evidence="1">
        <text>L-glutamyl-tRNA(Gln) + L-glutamine + ATP + H2O = L-glutaminyl-tRNA(Gln) + L-glutamate + ADP + phosphate + H(+)</text>
        <dbReference type="Rhea" id="RHEA:17521"/>
        <dbReference type="Rhea" id="RHEA-COMP:9681"/>
        <dbReference type="Rhea" id="RHEA-COMP:9684"/>
        <dbReference type="ChEBI" id="CHEBI:15377"/>
        <dbReference type="ChEBI" id="CHEBI:15378"/>
        <dbReference type="ChEBI" id="CHEBI:29985"/>
        <dbReference type="ChEBI" id="CHEBI:30616"/>
        <dbReference type="ChEBI" id="CHEBI:43474"/>
        <dbReference type="ChEBI" id="CHEBI:58359"/>
        <dbReference type="ChEBI" id="CHEBI:78520"/>
        <dbReference type="ChEBI" id="CHEBI:78521"/>
        <dbReference type="ChEBI" id="CHEBI:456216"/>
        <dbReference type="EC" id="6.3.5.7"/>
    </reaction>
</comment>
<comment type="subunit">
    <text evidence="1">Heterotrimer of A, B and C subunits.</text>
</comment>
<comment type="similarity">
    <text evidence="1">Belongs to the amidase family. GatA subfamily.</text>
</comment>
<organism>
    <name type="scientific">Chlorobium phaeobacteroides (strain BS1)</name>
    <dbReference type="NCBI Taxonomy" id="331678"/>
    <lineage>
        <taxon>Bacteria</taxon>
        <taxon>Pseudomonadati</taxon>
        <taxon>Chlorobiota</taxon>
        <taxon>Chlorobiia</taxon>
        <taxon>Chlorobiales</taxon>
        <taxon>Chlorobiaceae</taxon>
        <taxon>Chlorobium/Pelodictyon group</taxon>
        <taxon>Chlorobium</taxon>
    </lineage>
</organism>
<accession>B3EM22</accession>
<evidence type="ECO:0000255" key="1">
    <source>
        <dbReference type="HAMAP-Rule" id="MF_00120"/>
    </source>
</evidence>
<proteinExistence type="inferred from homology"/>
<sequence>MYFSSYQNLRKRLLSREISCETVVLDYLERIRKNHERNVYITVFNDQALQRAKELDRKLEAGEQPGRLFGLPMAVKDNLSVKDASLTCASKILEGYTAVYNATAVERLLKEDAVFLGKVNMDEFAMGSSNENSAFGPVPNPYDDSRVPGGSSGGSAAAVAGDLAMVALGSDTGGSVRQPAGFCNVVGLKPTYGRISRYGLVAFGSSFDQIGILSRNCDDAALVLGVIAGKDAADTTSSQHVVPDYLSEMGSVSLKGMKIGVPEEYFPETLDPGVALAVRNRLEELRDAGAELVDIALPESDHAIAAYYILTTAEASSNLARFDGARYGYRSGDASDLSGMYVNSRSEGFGGEVKRRIMLGTYVLSAGYYDTYYKKAQQVRRVFLDRYKEALAKVDVIAGPTSPFPPFGIGDKMDEPLEMYLADVFTVPASIAGLPALSVPAGFDRSGLPVGLQLIGDFFDEGKLLGIAREIQRSQEE</sequence>
<name>GATA_CHLPB</name>
<dbReference type="EC" id="6.3.5.7" evidence="1"/>
<dbReference type="EMBL" id="CP001101">
    <property type="protein sequence ID" value="ACE03400.1"/>
    <property type="molecule type" value="Genomic_DNA"/>
</dbReference>
<dbReference type="SMR" id="B3EM22"/>
<dbReference type="STRING" id="331678.Cphamn1_0436"/>
<dbReference type="KEGG" id="cpb:Cphamn1_0436"/>
<dbReference type="eggNOG" id="COG0154">
    <property type="taxonomic scope" value="Bacteria"/>
</dbReference>
<dbReference type="HOGENOM" id="CLU_009600_0_3_10"/>
<dbReference type="OrthoDB" id="9811471at2"/>
<dbReference type="GO" id="GO:0030956">
    <property type="term" value="C:glutamyl-tRNA(Gln) amidotransferase complex"/>
    <property type="evidence" value="ECO:0007669"/>
    <property type="project" value="InterPro"/>
</dbReference>
<dbReference type="GO" id="GO:0005524">
    <property type="term" value="F:ATP binding"/>
    <property type="evidence" value="ECO:0007669"/>
    <property type="project" value="UniProtKB-KW"/>
</dbReference>
<dbReference type="GO" id="GO:0050567">
    <property type="term" value="F:glutaminyl-tRNA synthase (glutamine-hydrolyzing) activity"/>
    <property type="evidence" value="ECO:0007669"/>
    <property type="project" value="UniProtKB-UniRule"/>
</dbReference>
<dbReference type="GO" id="GO:0006412">
    <property type="term" value="P:translation"/>
    <property type="evidence" value="ECO:0007669"/>
    <property type="project" value="UniProtKB-UniRule"/>
</dbReference>
<dbReference type="Gene3D" id="3.90.1300.10">
    <property type="entry name" value="Amidase signature (AS) domain"/>
    <property type="match status" value="1"/>
</dbReference>
<dbReference type="HAMAP" id="MF_00120">
    <property type="entry name" value="GatA"/>
    <property type="match status" value="1"/>
</dbReference>
<dbReference type="InterPro" id="IPR000120">
    <property type="entry name" value="Amidase"/>
</dbReference>
<dbReference type="InterPro" id="IPR020556">
    <property type="entry name" value="Amidase_CS"/>
</dbReference>
<dbReference type="InterPro" id="IPR023631">
    <property type="entry name" value="Amidase_dom"/>
</dbReference>
<dbReference type="InterPro" id="IPR036928">
    <property type="entry name" value="AS_sf"/>
</dbReference>
<dbReference type="InterPro" id="IPR004412">
    <property type="entry name" value="GatA"/>
</dbReference>
<dbReference type="NCBIfam" id="TIGR00132">
    <property type="entry name" value="gatA"/>
    <property type="match status" value="1"/>
</dbReference>
<dbReference type="PANTHER" id="PTHR11895:SF151">
    <property type="entry name" value="GLUTAMYL-TRNA(GLN) AMIDOTRANSFERASE SUBUNIT A"/>
    <property type="match status" value="1"/>
</dbReference>
<dbReference type="PANTHER" id="PTHR11895">
    <property type="entry name" value="TRANSAMIDASE"/>
    <property type="match status" value="1"/>
</dbReference>
<dbReference type="Pfam" id="PF01425">
    <property type="entry name" value="Amidase"/>
    <property type="match status" value="1"/>
</dbReference>
<dbReference type="SUPFAM" id="SSF75304">
    <property type="entry name" value="Amidase signature (AS) enzymes"/>
    <property type="match status" value="1"/>
</dbReference>
<dbReference type="PROSITE" id="PS00571">
    <property type="entry name" value="AMIDASES"/>
    <property type="match status" value="1"/>
</dbReference>
<feature type="chain" id="PRO_1000095120" description="Glutamyl-tRNA(Gln) amidotransferase subunit A">
    <location>
        <begin position="1"/>
        <end position="477"/>
    </location>
</feature>
<feature type="active site" description="Charge relay system" evidence="1">
    <location>
        <position position="76"/>
    </location>
</feature>
<feature type="active site" description="Charge relay system" evidence="1">
    <location>
        <position position="151"/>
    </location>
</feature>
<feature type="active site" description="Acyl-ester intermediate" evidence="1">
    <location>
        <position position="175"/>
    </location>
</feature>
<reference key="1">
    <citation type="submission" date="2008-06" db="EMBL/GenBank/DDBJ databases">
        <title>Complete sequence of Chlorobium phaeobacteroides BS1.</title>
        <authorList>
            <consortium name="US DOE Joint Genome Institute"/>
            <person name="Lucas S."/>
            <person name="Copeland A."/>
            <person name="Lapidus A."/>
            <person name="Glavina del Rio T."/>
            <person name="Dalin E."/>
            <person name="Tice H."/>
            <person name="Bruce D."/>
            <person name="Goodwin L."/>
            <person name="Pitluck S."/>
            <person name="Schmutz J."/>
            <person name="Larimer F."/>
            <person name="Land M."/>
            <person name="Hauser L."/>
            <person name="Kyrpides N."/>
            <person name="Ovchinnikova G."/>
            <person name="Li T."/>
            <person name="Liu Z."/>
            <person name="Zhao F."/>
            <person name="Overmann J."/>
            <person name="Bryant D.A."/>
            <person name="Richardson P."/>
        </authorList>
    </citation>
    <scope>NUCLEOTIDE SEQUENCE [LARGE SCALE GENOMIC DNA]</scope>
    <source>
        <strain>BS1</strain>
    </source>
</reference>
<gene>
    <name evidence="1" type="primary">gatA</name>
    <name type="ordered locus">Cphamn1_0436</name>
</gene>